<proteinExistence type="inferred from homology"/>
<dbReference type="EC" id="2.1.3.2" evidence="1"/>
<dbReference type="EMBL" id="CP001020">
    <property type="protein sequence ID" value="ACJ21235.1"/>
    <property type="molecule type" value="Genomic_DNA"/>
</dbReference>
<dbReference type="RefSeq" id="WP_005769929.1">
    <property type="nucleotide sequence ID" value="NC_011528.1"/>
</dbReference>
<dbReference type="SMR" id="B6J6M5"/>
<dbReference type="KEGG" id="cbc:CbuK_2145"/>
<dbReference type="HOGENOM" id="CLU_043846_2_0_6"/>
<dbReference type="UniPathway" id="UPA00070">
    <property type="reaction ID" value="UER00116"/>
</dbReference>
<dbReference type="GO" id="GO:0005829">
    <property type="term" value="C:cytosol"/>
    <property type="evidence" value="ECO:0007669"/>
    <property type="project" value="TreeGrafter"/>
</dbReference>
<dbReference type="GO" id="GO:0016597">
    <property type="term" value="F:amino acid binding"/>
    <property type="evidence" value="ECO:0007669"/>
    <property type="project" value="InterPro"/>
</dbReference>
<dbReference type="GO" id="GO:0004070">
    <property type="term" value="F:aspartate carbamoyltransferase activity"/>
    <property type="evidence" value="ECO:0007669"/>
    <property type="project" value="UniProtKB-UniRule"/>
</dbReference>
<dbReference type="GO" id="GO:0006207">
    <property type="term" value="P:'de novo' pyrimidine nucleobase biosynthetic process"/>
    <property type="evidence" value="ECO:0007669"/>
    <property type="project" value="InterPro"/>
</dbReference>
<dbReference type="GO" id="GO:0044205">
    <property type="term" value="P:'de novo' UMP biosynthetic process"/>
    <property type="evidence" value="ECO:0007669"/>
    <property type="project" value="UniProtKB-UniRule"/>
</dbReference>
<dbReference type="GO" id="GO:0006520">
    <property type="term" value="P:amino acid metabolic process"/>
    <property type="evidence" value="ECO:0007669"/>
    <property type="project" value="InterPro"/>
</dbReference>
<dbReference type="Gene3D" id="3.40.50.1370">
    <property type="entry name" value="Aspartate/ornithine carbamoyltransferase"/>
    <property type="match status" value="2"/>
</dbReference>
<dbReference type="HAMAP" id="MF_00001">
    <property type="entry name" value="Asp_carb_tr"/>
    <property type="match status" value="1"/>
</dbReference>
<dbReference type="InterPro" id="IPR006132">
    <property type="entry name" value="Asp/Orn_carbamoyltranf_P-bd"/>
</dbReference>
<dbReference type="InterPro" id="IPR006130">
    <property type="entry name" value="Asp/Orn_carbamoylTrfase"/>
</dbReference>
<dbReference type="InterPro" id="IPR036901">
    <property type="entry name" value="Asp/Orn_carbamoylTrfase_sf"/>
</dbReference>
<dbReference type="InterPro" id="IPR002082">
    <property type="entry name" value="Asp_carbamoyltransf"/>
</dbReference>
<dbReference type="InterPro" id="IPR006131">
    <property type="entry name" value="Asp_carbamoyltransf_Asp/Orn-bd"/>
</dbReference>
<dbReference type="NCBIfam" id="TIGR00670">
    <property type="entry name" value="asp_carb_tr"/>
    <property type="match status" value="1"/>
</dbReference>
<dbReference type="NCBIfam" id="NF002032">
    <property type="entry name" value="PRK00856.1"/>
    <property type="match status" value="1"/>
</dbReference>
<dbReference type="NCBIfam" id="NF010387">
    <property type="entry name" value="PRK13814.1"/>
    <property type="match status" value="1"/>
</dbReference>
<dbReference type="PANTHER" id="PTHR45753:SF6">
    <property type="entry name" value="ASPARTATE CARBAMOYLTRANSFERASE"/>
    <property type="match status" value="1"/>
</dbReference>
<dbReference type="PANTHER" id="PTHR45753">
    <property type="entry name" value="ORNITHINE CARBAMOYLTRANSFERASE, MITOCHONDRIAL"/>
    <property type="match status" value="1"/>
</dbReference>
<dbReference type="Pfam" id="PF00185">
    <property type="entry name" value="OTCace"/>
    <property type="match status" value="1"/>
</dbReference>
<dbReference type="Pfam" id="PF02729">
    <property type="entry name" value="OTCace_N"/>
    <property type="match status" value="1"/>
</dbReference>
<dbReference type="PRINTS" id="PR00100">
    <property type="entry name" value="AOTCASE"/>
</dbReference>
<dbReference type="PRINTS" id="PR00101">
    <property type="entry name" value="ATCASE"/>
</dbReference>
<dbReference type="SUPFAM" id="SSF53671">
    <property type="entry name" value="Aspartate/ornithine carbamoyltransferase"/>
    <property type="match status" value="1"/>
</dbReference>
<dbReference type="PROSITE" id="PS00097">
    <property type="entry name" value="CARBAMOYLTRANSFERASE"/>
    <property type="match status" value="1"/>
</dbReference>
<evidence type="ECO:0000255" key="1">
    <source>
        <dbReference type="HAMAP-Rule" id="MF_00001"/>
    </source>
</evidence>
<keyword id="KW-0665">Pyrimidine biosynthesis</keyword>
<keyword id="KW-0808">Transferase</keyword>
<comment type="function">
    <text evidence="1">Catalyzes the condensation of carbamoyl phosphate and aspartate to form carbamoyl aspartate and inorganic phosphate, the committed step in the de novo pyrimidine nucleotide biosynthesis pathway.</text>
</comment>
<comment type="catalytic activity">
    <reaction evidence="1">
        <text>carbamoyl phosphate + L-aspartate = N-carbamoyl-L-aspartate + phosphate + H(+)</text>
        <dbReference type="Rhea" id="RHEA:20013"/>
        <dbReference type="ChEBI" id="CHEBI:15378"/>
        <dbReference type="ChEBI" id="CHEBI:29991"/>
        <dbReference type="ChEBI" id="CHEBI:32814"/>
        <dbReference type="ChEBI" id="CHEBI:43474"/>
        <dbReference type="ChEBI" id="CHEBI:58228"/>
        <dbReference type="EC" id="2.1.3.2"/>
    </reaction>
</comment>
<comment type="pathway">
    <text evidence="1">Pyrimidine metabolism; UMP biosynthesis via de novo pathway; (S)-dihydroorotate from bicarbonate: step 2/3.</text>
</comment>
<comment type="subunit">
    <text evidence="1">Heterododecamer (2C3:3R2) of six catalytic PyrB chains organized as two trimers (C3), and six regulatory PyrI chains organized as three dimers (R2).</text>
</comment>
<comment type="similarity">
    <text evidence="1">Belongs to the aspartate/ornithine carbamoyltransferase superfamily. ATCase family.</text>
</comment>
<gene>
    <name evidence="1" type="primary">pyrB</name>
    <name type="ordered locus">CbuK_2145</name>
</gene>
<accession>B6J6M5</accession>
<protein>
    <recommendedName>
        <fullName evidence="1">Aspartate carbamoyltransferase catalytic subunit</fullName>
        <ecNumber evidence="1">2.1.3.2</ecNumber>
    </recommendedName>
    <alternativeName>
        <fullName evidence="1">Aspartate transcarbamylase</fullName>
        <shortName evidence="1">ATCase</shortName>
    </alternativeName>
</protein>
<organism>
    <name type="scientific">Coxiella burnetii (strain CbuK_Q154)</name>
    <name type="common">Coxiella burnetii (strain Q154)</name>
    <dbReference type="NCBI Taxonomy" id="434924"/>
    <lineage>
        <taxon>Bacteria</taxon>
        <taxon>Pseudomonadati</taxon>
        <taxon>Pseudomonadota</taxon>
        <taxon>Gammaproteobacteria</taxon>
        <taxon>Legionellales</taxon>
        <taxon>Coxiellaceae</taxon>
        <taxon>Coxiella</taxon>
    </lineage>
</organism>
<reference key="1">
    <citation type="journal article" date="2009" name="Infect. Immun.">
        <title>Comparative genomics reveal extensive transposon-mediated genomic plasticity and diversity among potential effector proteins within the genus Coxiella.</title>
        <authorList>
            <person name="Beare P.A."/>
            <person name="Unsworth N."/>
            <person name="Andoh M."/>
            <person name="Voth D.E."/>
            <person name="Omsland A."/>
            <person name="Gilk S.D."/>
            <person name="Williams K.P."/>
            <person name="Sobral B.W."/>
            <person name="Kupko J.J. III"/>
            <person name="Porcella S.F."/>
            <person name="Samuel J.E."/>
            <person name="Heinzen R.A."/>
        </authorList>
    </citation>
    <scope>NUCLEOTIDE SEQUENCE [LARGE SCALE GENOMIC DNA]</scope>
    <source>
        <strain>CbuK_Q154</strain>
    </source>
</reference>
<sequence length="310" mass="34972">MNELPLHLLNMRSLTRDHIEKLIQRANYFLTQGMEKNSVFETLKGHVVVNLFFEPSTRTRNSFEIAAKRLGAMVLNPNLKISAISKGETLFDTIKTLEAMGVYFFIVRHSENETPEQIAKQLSSGVVINAGDGNHQHPSQALIDLMTIKQHKPHWNKLCVTIIGDIRHSRVANSLMDGLVTMGVPEIRLVGPSSLLPDKVGNDSIKKFTELKPSLLNSDVIVTLRLQKERHDNSVDIDAFRGSFRLTPEKLYSAKPDAIVMHPGPVNREVEINSDVADNQQSVILQQVRNGVAMRMAVLELFLLRDFRFF</sequence>
<name>PYRB_COXB1</name>
<feature type="chain" id="PRO_1000088755" description="Aspartate carbamoyltransferase catalytic subunit">
    <location>
        <begin position="1"/>
        <end position="310"/>
    </location>
</feature>
<feature type="binding site" evidence="1">
    <location>
        <position position="58"/>
    </location>
    <ligand>
        <name>carbamoyl phosphate</name>
        <dbReference type="ChEBI" id="CHEBI:58228"/>
    </ligand>
</feature>
<feature type="binding site" evidence="1">
    <location>
        <position position="59"/>
    </location>
    <ligand>
        <name>carbamoyl phosphate</name>
        <dbReference type="ChEBI" id="CHEBI:58228"/>
    </ligand>
</feature>
<feature type="binding site" evidence="1">
    <location>
        <position position="86"/>
    </location>
    <ligand>
        <name>L-aspartate</name>
        <dbReference type="ChEBI" id="CHEBI:29991"/>
    </ligand>
</feature>
<feature type="binding site" evidence="1">
    <location>
        <position position="108"/>
    </location>
    <ligand>
        <name>carbamoyl phosphate</name>
        <dbReference type="ChEBI" id="CHEBI:58228"/>
    </ligand>
</feature>
<feature type="binding site" evidence="1">
    <location>
        <position position="137"/>
    </location>
    <ligand>
        <name>carbamoyl phosphate</name>
        <dbReference type="ChEBI" id="CHEBI:58228"/>
    </ligand>
</feature>
<feature type="binding site" evidence="1">
    <location>
        <position position="140"/>
    </location>
    <ligand>
        <name>carbamoyl phosphate</name>
        <dbReference type="ChEBI" id="CHEBI:58228"/>
    </ligand>
</feature>
<feature type="binding site" evidence="1">
    <location>
        <position position="170"/>
    </location>
    <ligand>
        <name>L-aspartate</name>
        <dbReference type="ChEBI" id="CHEBI:29991"/>
    </ligand>
</feature>
<feature type="binding site" evidence="1">
    <location>
        <position position="225"/>
    </location>
    <ligand>
        <name>L-aspartate</name>
        <dbReference type="ChEBI" id="CHEBI:29991"/>
    </ligand>
</feature>
<feature type="binding site" evidence="1">
    <location>
        <position position="264"/>
    </location>
    <ligand>
        <name>carbamoyl phosphate</name>
        <dbReference type="ChEBI" id="CHEBI:58228"/>
    </ligand>
</feature>
<feature type="binding site" evidence="1">
    <location>
        <position position="265"/>
    </location>
    <ligand>
        <name>carbamoyl phosphate</name>
        <dbReference type="ChEBI" id="CHEBI:58228"/>
    </ligand>
</feature>